<feature type="chain" id="PRO_1000206606" description="Small ribosomal subunit protein uS10">
    <location>
        <begin position="1"/>
        <end position="104"/>
    </location>
</feature>
<sequence length="104" mass="11834">MATKQKIRIRLKAFDYKLIDQSAAEIVDTAKRTGAIVKGPVPLPTRMKRFDILRSPHVNKTSRDQLEIRTHQRLMDIVDPTDKTVDALMKLDLPAGVDVEIKLQ</sequence>
<dbReference type="EMBL" id="CP001635">
    <property type="protein sequence ID" value="ACS21520.1"/>
    <property type="molecule type" value="Genomic_DNA"/>
</dbReference>
<dbReference type="SMR" id="C5CP56"/>
<dbReference type="STRING" id="543728.Vapar_4916"/>
<dbReference type="KEGG" id="vap:Vapar_4916"/>
<dbReference type="eggNOG" id="COG0051">
    <property type="taxonomic scope" value="Bacteria"/>
</dbReference>
<dbReference type="HOGENOM" id="CLU_122625_1_3_4"/>
<dbReference type="OrthoDB" id="9804464at2"/>
<dbReference type="GO" id="GO:1990904">
    <property type="term" value="C:ribonucleoprotein complex"/>
    <property type="evidence" value="ECO:0007669"/>
    <property type="project" value="UniProtKB-KW"/>
</dbReference>
<dbReference type="GO" id="GO:0005840">
    <property type="term" value="C:ribosome"/>
    <property type="evidence" value="ECO:0007669"/>
    <property type="project" value="UniProtKB-KW"/>
</dbReference>
<dbReference type="GO" id="GO:0003735">
    <property type="term" value="F:structural constituent of ribosome"/>
    <property type="evidence" value="ECO:0007669"/>
    <property type="project" value="InterPro"/>
</dbReference>
<dbReference type="GO" id="GO:0000049">
    <property type="term" value="F:tRNA binding"/>
    <property type="evidence" value="ECO:0007669"/>
    <property type="project" value="UniProtKB-UniRule"/>
</dbReference>
<dbReference type="GO" id="GO:0006412">
    <property type="term" value="P:translation"/>
    <property type="evidence" value="ECO:0007669"/>
    <property type="project" value="UniProtKB-UniRule"/>
</dbReference>
<dbReference type="FunFam" id="3.30.70.600:FF:000001">
    <property type="entry name" value="30S ribosomal protein S10"/>
    <property type="match status" value="1"/>
</dbReference>
<dbReference type="Gene3D" id="3.30.70.600">
    <property type="entry name" value="Ribosomal protein S10 domain"/>
    <property type="match status" value="1"/>
</dbReference>
<dbReference type="HAMAP" id="MF_00508">
    <property type="entry name" value="Ribosomal_uS10"/>
    <property type="match status" value="1"/>
</dbReference>
<dbReference type="InterPro" id="IPR001848">
    <property type="entry name" value="Ribosomal_uS10"/>
</dbReference>
<dbReference type="InterPro" id="IPR018268">
    <property type="entry name" value="Ribosomal_uS10_CS"/>
</dbReference>
<dbReference type="InterPro" id="IPR027486">
    <property type="entry name" value="Ribosomal_uS10_dom"/>
</dbReference>
<dbReference type="InterPro" id="IPR036838">
    <property type="entry name" value="Ribosomal_uS10_dom_sf"/>
</dbReference>
<dbReference type="NCBIfam" id="NF001861">
    <property type="entry name" value="PRK00596.1"/>
    <property type="match status" value="1"/>
</dbReference>
<dbReference type="NCBIfam" id="TIGR01049">
    <property type="entry name" value="rpsJ_bact"/>
    <property type="match status" value="1"/>
</dbReference>
<dbReference type="PANTHER" id="PTHR11700">
    <property type="entry name" value="30S RIBOSOMAL PROTEIN S10 FAMILY MEMBER"/>
    <property type="match status" value="1"/>
</dbReference>
<dbReference type="Pfam" id="PF00338">
    <property type="entry name" value="Ribosomal_S10"/>
    <property type="match status" value="1"/>
</dbReference>
<dbReference type="PRINTS" id="PR00971">
    <property type="entry name" value="RIBOSOMALS10"/>
</dbReference>
<dbReference type="SMART" id="SM01403">
    <property type="entry name" value="Ribosomal_S10"/>
    <property type="match status" value="1"/>
</dbReference>
<dbReference type="SUPFAM" id="SSF54999">
    <property type="entry name" value="Ribosomal protein S10"/>
    <property type="match status" value="1"/>
</dbReference>
<dbReference type="PROSITE" id="PS00361">
    <property type="entry name" value="RIBOSOMAL_S10"/>
    <property type="match status" value="1"/>
</dbReference>
<name>RS10_VARPS</name>
<accession>C5CP56</accession>
<keyword id="KW-0687">Ribonucleoprotein</keyword>
<keyword id="KW-0689">Ribosomal protein</keyword>
<organism>
    <name type="scientific">Variovorax paradoxus (strain S110)</name>
    <dbReference type="NCBI Taxonomy" id="543728"/>
    <lineage>
        <taxon>Bacteria</taxon>
        <taxon>Pseudomonadati</taxon>
        <taxon>Pseudomonadota</taxon>
        <taxon>Betaproteobacteria</taxon>
        <taxon>Burkholderiales</taxon>
        <taxon>Comamonadaceae</taxon>
        <taxon>Variovorax</taxon>
    </lineage>
</organism>
<comment type="function">
    <text evidence="1">Involved in the binding of tRNA to the ribosomes.</text>
</comment>
<comment type="subunit">
    <text evidence="1">Part of the 30S ribosomal subunit.</text>
</comment>
<comment type="similarity">
    <text evidence="1">Belongs to the universal ribosomal protein uS10 family.</text>
</comment>
<evidence type="ECO:0000255" key="1">
    <source>
        <dbReference type="HAMAP-Rule" id="MF_00508"/>
    </source>
</evidence>
<evidence type="ECO:0000305" key="2"/>
<reference key="1">
    <citation type="journal article" date="2011" name="J. Bacteriol.">
        <title>Complete genome sequence of the metabolically versatile plant growth-promoting endophyte, Variovorax paradoxus S110.</title>
        <authorList>
            <person name="Han J.I."/>
            <person name="Choi H.K."/>
            <person name="Lee S.W."/>
            <person name="Orwin P.M."/>
            <person name="Kim J."/>
            <person name="Laroe S.L."/>
            <person name="Kim T.G."/>
            <person name="O'Neil J."/>
            <person name="Leadbetter J.R."/>
            <person name="Lee S.Y."/>
            <person name="Hur C.G."/>
            <person name="Spain J.C."/>
            <person name="Ovchinnikova G."/>
            <person name="Goodwin L."/>
            <person name="Han C."/>
        </authorList>
    </citation>
    <scope>NUCLEOTIDE SEQUENCE [LARGE SCALE GENOMIC DNA]</scope>
    <source>
        <strain>S110</strain>
    </source>
</reference>
<proteinExistence type="inferred from homology"/>
<gene>
    <name evidence="1" type="primary">rpsJ</name>
    <name type="ordered locus">Vapar_4916</name>
</gene>
<protein>
    <recommendedName>
        <fullName evidence="1">Small ribosomal subunit protein uS10</fullName>
    </recommendedName>
    <alternativeName>
        <fullName evidence="2">30S ribosomal protein S10</fullName>
    </alternativeName>
</protein>